<name>NPD_VIBCH</name>
<gene>
    <name evidence="1" type="primary">cobB</name>
    <name type="ordered locus">VC_1509</name>
</gene>
<dbReference type="EC" id="2.3.1.286" evidence="1"/>
<dbReference type="EMBL" id="AE003852">
    <property type="protein sequence ID" value="AAF94664.1"/>
    <property type="status" value="ALT_INIT"/>
    <property type="molecule type" value="Genomic_DNA"/>
</dbReference>
<dbReference type="PIR" id="E82191">
    <property type="entry name" value="E82191"/>
</dbReference>
<dbReference type="RefSeq" id="NP_231150.1">
    <property type="nucleotide sequence ID" value="NC_002505.1"/>
</dbReference>
<dbReference type="RefSeq" id="WP_000056950.1">
    <property type="nucleotide sequence ID" value="NZ_LT906614.1"/>
</dbReference>
<dbReference type="SMR" id="Q9KRX4"/>
<dbReference type="STRING" id="243277.VC_1509"/>
<dbReference type="DNASU" id="2614015"/>
<dbReference type="EnsemblBacteria" id="AAF94664">
    <property type="protein sequence ID" value="AAF94664"/>
    <property type="gene ID" value="VC_1509"/>
</dbReference>
<dbReference type="GeneID" id="89514416"/>
<dbReference type="KEGG" id="vch:VC_1509"/>
<dbReference type="PATRIC" id="fig|243277.26.peg.1436"/>
<dbReference type="eggNOG" id="COG0846">
    <property type="taxonomic scope" value="Bacteria"/>
</dbReference>
<dbReference type="HOGENOM" id="CLU_023643_3_1_6"/>
<dbReference type="PHI-base" id="PHI:8477"/>
<dbReference type="Proteomes" id="UP000000584">
    <property type="component" value="Chromosome 1"/>
</dbReference>
<dbReference type="GO" id="GO:0005737">
    <property type="term" value="C:cytoplasm"/>
    <property type="evidence" value="ECO:0007669"/>
    <property type="project" value="UniProtKB-SubCell"/>
</dbReference>
<dbReference type="GO" id="GO:0017136">
    <property type="term" value="F:histone deacetylase activity, NAD-dependent"/>
    <property type="evidence" value="ECO:0000318"/>
    <property type="project" value="GO_Central"/>
</dbReference>
<dbReference type="GO" id="GO:0070403">
    <property type="term" value="F:NAD+ binding"/>
    <property type="evidence" value="ECO:0000318"/>
    <property type="project" value="GO_Central"/>
</dbReference>
<dbReference type="GO" id="GO:0036054">
    <property type="term" value="F:protein-malonyllysine demalonylase activity"/>
    <property type="evidence" value="ECO:0007669"/>
    <property type="project" value="InterPro"/>
</dbReference>
<dbReference type="GO" id="GO:0036055">
    <property type="term" value="F:protein-succinyllysine desuccinylase activity"/>
    <property type="evidence" value="ECO:0007669"/>
    <property type="project" value="UniProtKB-UniRule"/>
</dbReference>
<dbReference type="GO" id="GO:0008270">
    <property type="term" value="F:zinc ion binding"/>
    <property type="evidence" value="ECO:0007669"/>
    <property type="project" value="UniProtKB-UniRule"/>
</dbReference>
<dbReference type="CDD" id="cd01412">
    <property type="entry name" value="SIRT5_Af1_CobB"/>
    <property type="match status" value="1"/>
</dbReference>
<dbReference type="Gene3D" id="3.30.1600.10">
    <property type="entry name" value="SIR2/SIRT2 'Small Domain"/>
    <property type="match status" value="1"/>
</dbReference>
<dbReference type="Gene3D" id="3.40.50.1220">
    <property type="entry name" value="TPP-binding domain"/>
    <property type="match status" value="1"/>
</dbReference>
<dbReference type="HAMAP" id="MF_01121">
    <property type="entry name" value="Sirtuin_ClassIII"/>
    <property type="match status" value="1"/>
</dbReference>
<dbReference type="InterPro" id="IPR029035">
    <property type="entry name" value="DHS-like_NAD/FAD-binding_dom"/>
</dbReference>
<dbReference type="InterPro" id="IPR050134">
    <property type="entry name" value="NAD-dep_sirtuin_deacylases"/>
</dbReference>
<dbReference type="InterPro" id="IPR003000">
    <property type="entry name" value="Sirtuin"/>
</dbReference>
<dbReference type="InterPro" id="IPR026591">
    <property type="entry name" value="Sirtuin_cat_small_dom_sf"/>
</dbReference>
<dbReference type="InterPro" id="IPR027546">
    <property type="entry name" value="Sirtuin_class_III"/>
</dbReference>
<dbReference type="InterPro" id="IPR026590">
    <property type="entry name" value="Ssirtuin_cat_dom"/>
</dbReference>
<dbReference type="NCBIfam" id="NF001755">
    <property type="entry name" value="PRK00481.1-5"/>
    <property type="match status" value="1"/>
</dbReference>
<dbReference type="PANTHER" id="PTHR11085:SF4">
    <property type="entry name" value="NAD-DEPENDENT PROTEIN DEACYLASE"/>
    <property type="match status" value="1"/>
</dbReference>
<dbReference type="PANTHER" id="PTHR11085">
    <property type="entry name" value="NAD-DEPENDENT PROTEIN DEACYLASE SIRTUIN-5, MITOCHONDRIAL-RELATED"/>
    <property type="match status" value="1"/>
</dbReference>
<dbReference type="Pfam" id="PF02146">
    <property type="entry name" value="SIR2"/>
    <property type="match status" value="1"/>
</dbReference>
<dbReference type="SUPFAM" id="SSF52467">
    <property type="entry name" value="DHS-like NAD/FAD-binding domain"/>
    <property type="match status" value="1"/>
</dbReference>
<dbReference type="PROSITE" id="PS50305">
    <property type="entry name" value="SIRTUIN"/>
    <property type="match status" value="1"/>
</dbReference>
<feature type="chain" id="PRO_0000110368" description="NAD-dependent protein deacylase">
    <location>
        <begin position="1"/>
        <end position="246"/>
    </location>
</feature>
<feature type="domain" description="Deacetylase sirtuin-type" evidence="2">
    <location>
        <begin position="1"/>
        <end position="237"/>
    </location>
</feature>
<feature type="active site" description="Proton acceptor" evidence="1">
    <location>
        <position position="112"/>
    </location>
</feature>
<feature type="binding site" evidence="1">
    <location>
        <begin position="13"/>
        <end position="32"/>
    </location>
    <ligand>
        <name>NAD(+)</name>
        <dbReference type="ChEBI" id="CHEBI:57540"/>
    </ligand>
</feature>
<feature type="binding site" evidence="1">
    <location>
        <position position="57"/>
    </location>
    <ligand>
        <name>substrate</name>
    </ligand>
</feature>
<feature type="binding site" evidence="1">
    <location>
        <position position="60"/>
    </location>
    <ligand>
        <name>substrate</name>
    </ligand>
</feature>
<feature type="binding site" evidence="1">
    <location>
        <begin position="94"/>
        <end position="97"/>
    </location>
    <ligand>
        <name>NAD(+)</name>
        <dbReference type="ChEBI" id="CHEBI:57540"/>
    </ligand>
</feature>
<feature type="binding site" evidence="1">
    <location>
        <position position="120"/>
    </location>
    <ligand>
        <name>Zn(2+)</name>
        <dbReference type="ChEBI" id="CHEBI:29105"/>
    </ligand>
</feature>
<feature type="binding site" evidence="1">
    <location>
        <position position="139"/>
    </location>
    <ligand>
        <name>Zn(2+)</name>
        <dbReference type="ChEBI" id="CHEBI:29105"/>
    </ligand>
</feature>
<feature type="binding site" evidence="1">
    <location>
        <begin position="179"/>
        <end position="181"/>
    </location>
    <ligand>
        <name>NAD(+)</name>
        <dbReference type="ChEBI" id="CHEBI:57540"/>
    </ligand>
</feature>
<feature type="binding site" evidence="1">
    <location>
        <begin position="205"/>
        <end position="207"/>
    </location>
    <ligand>
        <name>NAD(+)</name>
        <dbReference type="ChEBI" id="CHEBI:57540"/>
    </ligand>
</feature>
<feature type="binding site" evidence="1">
    <location>
        <position position="223"/>
    </location>
    <ligand>
        <name>NAD(+)</name>
        <dbReference type="ChEBI" id="CHEBI:57540"/>
    </ligand>
</feature>
<proteinExistence type="inferred from homology"/>
<organism>
    <name type="scientific">Vibrio cholerae serotype O1 (strain ATCC 39315 / El Tor Inaba N16961)</name>
    <dbReference type="NCBI Taxonomy" id="243277"/>
    <lineage>
        <taxon>Bacteria</taxon>
        <taxon>Pseudomonadati</taxon>
        <taxon>Pseudomonadota</taxon>
        <taxon>Gammaproteobacteria</taxon>
        <taxon>Vibrionales</taxon>
        <taxon>Vibrionaceae</taxon>
        <taxon>Vibrio</taxon>
    </lineage>
</organism>
<reference key="1">
    <citation type="journal article" date="2000" name="Nature">
        <title>DNA sequence of both chromosomes of the cholera pathogen Vibrio cholerae.</title>
        <authorList>
            <person name="Heidelberg J.F."/>
            <person name="Eisen J.A."/>
            <person name="Nelson W.C."/>
            <person name="Clayton R.A."/>
            <person name="Gwinn M.L."/>
            <person name="Dodson R.J."/>
            <person name="Haft D.H."/>
            <person name="Hickey E.K."/>
            <person name="Peterson J.D."/>
            <person name="Umayam L.A."/>
            <person name="Gill S.R."/>
            <person name="Nelson K.E."/>
            <person name="Read T.D."/>
            <person name="Tettelin H."/>
            <person name="Richardson D.L."/>
            <person name="Ermolaeva M.D."/>
            <person name="Vamathevan J.J."/>
            <person name="Bass S."/>
            <person name="Qin H."/>
            <person name="Dragoi I."/>
            <person name="Sellers P."/>
            <person name="McDonald L.A."/>
            <person name="Utterback T.R."/>
            <person name="Fleischmann R.D."/>
            <person name="Nierman W.C."/>
            <person name="White O."/>
            <person name="Salzberg S.L."/>
            <person name="Smith H.O."/>
            <person name="Colwell R.R."/>
            <person name="Mekalanos J.J."/>
            <person name="Venter J.C."/>
            <person name="Fraser C.M."/>
        </authorList>
    </citation>
    <scope>NUCLEOTIDE SEQUENCE [LARGE SCALE GENOMIC DNA]</scope>
    <source>
        <strain>ATCC 39315 / El Tor Inaba N16961</strain>
    </source>
</reference>
<keyword id="KW-0963">Cytoplasm</keyword>
<keyword id="KW-0479">Metal-binding</keyword>
<keyword id="KW-0520">NAD</keyword>
<keyword id="KW-1185">Reference proteome</keyword>
<keyword id="KW-0808">Transferase</keyword>
<keyword id="KW-0862">Zinc</keyword>
<evidence type="ECO:0000255" key="1">
    <source>
        <dbReference type="HAMAP-Rule" id="MF_01121"/>
    </source>
</evidence>
<evidence type="ECO:0000255" key="2">
    <source>
        <dbReference type="PROSITE-ProRule" id="PRU00236"/>
    </source>
</evidence>
<evidence type="ECO:0000305" key="3"/>
<sequence>MSLPYRHVVILTGAGISAESGIQTFRAQDGLWENHRIEDVATPEGFQRDPDMVLEFYNQRRRKLLSDAIQPNPAHLALGKLEKELQGSVTVITQNIDNLHERGGSQNIIHMHGELLKARCPESNQTVEQKEDIRHGDLCHCCQMPAQMRPHIVWFGEMPLRMGDIYAALEQADLFVSIGTSGVVYPAAGFVHDARMHGAHTIEINLEPSAVESEFAEKRYGKASIEVPRLVEEILAAQARAKESAA</sequence>
<accession>Q9KRX4</accession>
<protein>
    <recommendedName>
        <fullName evidence="1">NAD-dependent protein deacylase</fullName>
        <ecNumber evidence="1">2.3.1.286</ecNumber>
    </recommendedName>
    <alternativeName>
        <fullName evidence="1">Regulatory protein SIR2 homolog</fullName>
    </alternativeName>
</protein>
<comment type="function">
    <text evidence="1">NAD-dependent lysine deacetylase and desuccinylase that specifically removes acetyl and succinyl groups on target proteins. Modulates the activities of several proteins which are inactive in their acylated form.</text>
</comment>
<comment type="catalytic activity">
    <reaction evidence="1">
        <text>N(6)-acetyl-L-lysyl-[protein] + NAD(+) + H2O = 2''-O-acetyl-ADP-D-ribose + nicotinamide + L-lysyl-[protein]</text>
        <dbReference type="Rhea" id="RHEA:43636"/>
        <dbReference type="Rhea" id="RHEA-COMP:9752"/>
        <dbReference type="Rhea" id="RHEA-COMP:10731"/>
        <dbReference type="ChEBI" id="CHEBI:15377"/>
        <dbReference type="ChEBI" id="CHEBI:17154"/>
        <dbReference type="ChEBI" id="CHEBI:29969"/>
        <dbReference type="ChEBI" id="CHEBI:57540"/>
        <dbReference type="ChEBI" id="CHEBI:61930"/>
        <dbReference type="ChEBI" id="CHEBI:83767"/>
        <dbReference type="EC" id="2.3.1.286"/>
    </reaction>
</comment>
<comment type="catalytic activity">
    <reaction evidence="1">
        <text>N(6)-succinyl-L-lysyl-[protein] + NAD(+) + H2O = 2''-O-succinyl-ADP-D-ribose + nicotinamide + L-lysyl-[protein]</text>
        <dbReference type="Rhea" id="RHEA:47668"/>
        <dbReference type="Rhea" id="RHEA-COMP:9752"/>
        <dbReference type="Rhea" id="RHEA-COMP:11877"/>
        <dbReference type="ChEBI" id="CHEBI:15377"/>
        <dbReference type="ChEBI" id="CHEBI:17154"/>
        <dbReference type="ChEBI" id="CHEBI:29969"/>
        <dbReference type="ChEBI" id="CHEBI:57540"/>
        <dbReference type="ChEBI" id="CHEBI:87830"/>
        <dbReference type="ChEBI" id="CHEBI:87832"/>
    </reaction>
</comment>
<comment type="cofactor">
    <cofactor evidence="1">
        <name>Zn(2+)</name>
        <dbReference type="ChEBI" id="CHEBI:29105"/>
    </cofactor>
    <text evidence="1">Binds 1 zinc ion per subunit.</text>
</comment>
<comment type="subcellular location">
    <subcellularLocation>
        <location evidence="1">Cytoplasm</location>
    </subcellularLocation>
</comment>
<comment type="domain">
    <text evidence="1">2 residues (Tyr-57 and Arg-60) present in a large hydrophobic pocket are probably involved in substrate specificity. They are important for desuccinylation activity, but dispensable for deacetylation activity.</text>
</comment>
<comment type="similarity">
    <text evidence="1">Belongs to the sirtuin family. Class III subfamily.</text>
</comment>
<comment type="sequence caution" evidence="3">
    <conflict type="erroneous initiation">
        <sequence resource="EMBL-CDS" id="AAF94664"/>
    </conflict>
    <text>Extended N-terminus.</text>
</comment>